<proteinExistence type="inferred from homology"/>
<accession>Q7TTR0</accession>
<name>MNMA_PROMM</name>
<gene>
    <name evidence="1" type="primary">mnmA</name>
    <name type="ordered locus">PMT_0344</name>
</gene>
<organism>
    <name type="scientific">Prochlorococcus marinus (strain MIT 9313)</name>
    <dbReference type="NCBI Taxonomy" id="74547"/>
    <lineage>
        <taxon>Bacteria</taxon>
        <taxon>Bacillati</taxon>
        <taxon>Cyanobacteriota</taxon>
        <taxon>Cyanophyceae</taxon>
        <taxon>Synechococcales</taxon>
        <taxon>Prochlorococcaceae</taxon>
        <taxon>Prochlorococcus</taxon>
    </lineage>
</organism>
<protein>
    <recommendedName>
        <fullName evidence="1">tRNA-specific 2-thiouridylase MnmA</fullName>
        <ecNumber evidence="1">2.8.1.13</ecNumber>
    </recommendedName>
</protein>
<keyword id="KW-0067">ATP-binding</keyword>
<keyword id="KW-0963">Cytoplasm</keyword>
<keyword id="KW-1015">Disulfide bond</keyword>
<keyword id="KW-0547">Nucleotide-binding</keyword>
<keyword id="KW-1185">Reference proteome</keyword>
<keyword id="KW-0694">RNA-binding</keyword>
<keyword id="KW-0808">Transferase</keyword>
<keyword id="KW-0819">tRNA processing</keyword>
<keyword id="KW-0820">tRNA-binding</keyword>
<evidence type="ECO:0000255" key="1">
    <source>
        <dbReference type="HAMAP-Rule" id="MF_00144"/>
    </source>
</evidence>
<evidence type="ECO:0000305" key="2"/>
<reference key="1">
    <citation type="journal article" date="2003" name="Nature">
        <title>Genome divergence in two Prochlorococcus ecotypes reflects oceanic niche differentiation.</title>
        <authorList>
            <person name="Rocap G."/>
            <person name="Larimer F.W."/>
            <person name="Lamerdin J.E."/>
            <person name="Malfatti S."/>
            <person name="Chain P."/>
            <person name="Ahlgren N.A."/>
            <person name="Arellano A."/>
            <person name="Coleman M."/>
            <person name="Hauser L."/>
            <person name="Hess W.R."/>
            <person name="Johnson Z.I."/>
            <person name="Land M.L."/>
            <person name="Lindell D."/>
            <person name="Post A.F."/>
            <person name="Regala W."/>
            <person name="Shah M."/>
            <person name="Shaw S.L."/>
            <person name="Steglich C."/>
            <person name="Sullivan M.B."/>
            <person name="Ting C.S."/>
            <person name="Tolonen A."/>
            <person name="Webb E.A."/>
            <person name="Zinser E.R."/>
            <person name="Chisholm S.W."/>
        </authorList>
    </citation>
    <scope>NUCLEOTIDE SEQUENCE [LARGE SCALE GENOMIC DNA]</scope>
    <source>
        <strain>MIT 9313</strain>
    </source>
</reference>
<feature type="chain" id="PRO_0000349749" description="tRNA-specific 2-thiouridylase MnmA">
    <location>
        <begin position="1"/>
        <end position="409"/>
    </location>
</feature>
<feature type="region of interest" description="Interaction with tRNA" evidence="1">
    <location>
        <begin position="187"/>
        <end position="189"/>
    </location>
</feature>
<feature type="region of interest" description="Interaction with tRNA" evidence="1">
    <location>
        <begin position="342"/>
        <end position="343"/>
    </location>
</feature>
<feature type="active site" description="Nucleophile" evidence="1">
    <location>
        <position position="127"/>
    </location>
</feature>
<feature type="active site" description="Cysteine persulfide intermediate" evidence="1">
    <location>
        <position position="237"/>
    </location>
</feature>
<feature type="binding site" evidence="1">
    <location>
        <begin position="40"/>
        <end position="47"/>
    </location>
    <ligand>
        <name>ATP</name>
        <dbReference type="ChEBI" id="CHEBI:30616"/>
    </ligand>
</feature>
<feature type="binding site" evidence="1">
    <location>
        <position position="66"/>
    </location>
    <ligand>
        <name>ATP</name>
        <dbReference type="ChEBI" id="CHEBI:30616"/>
    </ligand>
</feature>
<feature type="binding site" evidence="1">
    <location>
        <position position="152"/>
    </location>
    <ligand>
        <name>ATP</name>
        <dbReference type="ChEBI" id="CHEBI:30616"/>
    </ligand>
</feature>
<feature type="site" description="Interaction with tRNA" evidence="1">
    <location>
        <position position="153"/>
    </location>
</feature>
<feature type="site" description="Interaction with tRNA" evidence="1">
    <location>
        <position position="385"/>
    </location>
</feature>
<feature type="disulfide bond" description="Alternate" evidence="1">
    <location>
        <begin position="127"/>
        <end position="237"/>
    </location>
</feature>
<comment type="function">
    <text evidence="1">Catalyzes the 2-thiolation of uridine at the wobble position (U34) of tRNA, leading to the formation of s(2)U34.</text>
</comment>
<comment type="catalytic activity">
    <reaction evidence="1">
        <text>S-sulfanyl-L-cysteinyl-[protein] + uridine(34) in tRNA + AH2 + ATP = 2-thiouridine(34) in tRNA + L-cysteinyl-[protein] + A + AMP + diphosphate + H(+)</text>
        <dbReference type="Rhea" id="RHEA:47032"/>
        <dbReference type="Rhea" id="RHEA-COMP:10131"/>
        <dbReference type="Rhea" id="RHEA-COMP:11726"/>
        <dbReference type="Rhea" id="RHEA-COMP:11727"/>
        <dbReference type="Rhea" id="RHEA-COMP:11728"/>
        <dbReference type="ChEBI" id="CHEBI:13193"/>
        <dbReference type="ChEBI" id="CHEBI:15378"/>
        <dbReference type="ChEBI" id="CHEBI:17499"/>
        <dbReference type="ChEBI" id="CHEBI:29950"/>
        <dbReference type="ChEBI" id="CHEBI:30616"/>
        <dbReference type="ChEBI" id="CHEBI:33019"/>
        <dbReference type="ChEBI" id="CHEBI:61963"/>
        <dbReference type="ChEBI" id="CHEBI:65315"/>
        <dbReference type="ChEBI" id="CHEBI:87170"/>
        <dbReference type="ChEBI" id="CHEBI:456215"/>
        <dbReference type="EC" id="2.8.1.13"/>
    </reaction>
</comment>
<comment type="subcellular location">
    <subcellularLocation>
        <location evidence="1">Cytoplasm</location>
    </subcellularLocation>
</comment>
<comment type="similarity">
    <text evidence="1">Belongs to the MnmA/TRMU family.</text>
</comment>
<comment type="sequence caution" evidence="2">
    <conflict type="erroneous initiation">
        <sequence resource="EMBL-CDS" id="CAE20519"/>
    </conflict>
</comment>
<sequence>MQPPIPAPLKHVSRTPATPAVAKALTRLQCWPGEQRVAVGLSGGVDSSLSAALLVEAGWQVEGLTLWLMSGKGACCSDGLIDAAGICEQLKIPHHVVDSRATFQAEIVDQLVQGYQQGVTPLPCSRCNRSVKFAEMLSWAKKELQLHRVATGHYARIRHREDPEPQQALPGDSIGRHQLLRGLDQNKDQSYFLYDLSQDVLAKVIFPLGELTKAETRQEAERYGLRTAKKEESQDLCLADHYGSMKAFLDNYLPARQGEIVLQDGKVVGEHDGIEHFTIGQRKGLGVAWREPLHVVQLDAAANRVIVAPRAEAGRDNCVVGAVNWISMAPPSTTINVEVQVRYRSGPVAAQLTPIEATAEDIAADRPHRCRLTFNEKQFSITPGQAAVFYAADTVLGGGLIQQVNTASS</sequence>
<dbReference type="EC" id="2.8.1.13" evidence="1"/>
<dbReference type="EMBL" id="BX548175">
    <property type="protein sequence ID" value="CAE20519.1"/>
    <property type="status" value="ALT_INIT"/>
    <property type="molecule type" value="Genomic_DNA"/>
</dbReference>
<dbReference type="RefSeq" id="WP_011129723.1">
    <property type="nucleotide sequence ID" value="NC_005071.1"/>
</dbReference>
<dbReference type="SMR" id="Q7TTR0"/>
<dbReference type="KEGG" id="pmt:PMT_0344"/>
<dbReference type="eggNOG" id="COG0482">
    <property type="taxonomic scope" value="Bacteria"/>
</dbReference>
<dbReference type="HOGENOM" id="CLU_035188_0_0_3"/>
<dbReference type="Proteomes" id="UP000001423">
    <property type="component" value="Chromosome"/>
</dbReference>
<dbReference type="GO" id="GO:0005737">
    <property type="term" value="C:cytoplasm"/>
    <property type="evidence" value="ECO:0007669"/>
    <property type="project" value="UniProtKB-SubCell"/>
</dbReference>
<dbReference type="GO" id="GO:0005524">
    <property type="term" value="F:ATP binding"/>
    <property type="evidence" value="ECO:0007669"/>
    <property type="project" value="UniProtKB-KW"/>
</dbReference>
<dbReference type="GO" id="GO:0000049">
    <property type="term" value="F:tRNA binding"/>
    <property type="evidence" value="ECO:0007669"/>
    <property type="project" value="UniProtKB-KW"/>
</dbReference>
<dbReference type="GO" id="GO:0103016">
    <property type="term" value="F:tRNA-uridine 2-sulfurtransferase activity"/>
    <property type="evidence" value="ECO:0007669"/>
    <property type="project" value="UniProtKB-EC"/>
</dbReference>
<dbReference type="GO" id="GO:0002143">
    <property type="term" value="P:tRNA wobble position uridine thiolation"/>
    <property type="evidence" value="ECO:0007669"/>
    <property type="project" value="TreeGrafter"/>
</dbReference>
<dbReference type="CDD" id="cd01998">
    <property type="entry name" value="MnmA_TRMU-like"/>
    <property type="match status" value="1"/>
</dbReference>
<dbReference type="FunFam" id="2.30.30.280:FF:000001">
    <property type="entry name" value="tRNA-specific 2-thiouridylase MnmA"/>
    <property type="match status" value="1"/>
</dbReference>
<dbReference type="Gene3D" id="2.30.30.280">
    <property type="entry name" value="Adenine nucleotide alpha hydrolases-like domains"/>
    <property type="match status" value="1"/>
</dbReference>
<dbReference type="Gene3D" id="3.40.50.620">
    <property type="entry name" value="HUPs"/>
    <property type="match status" value="1"/>
</dbReference>
<dbReference type="Gene3D" id="2.40.30.10">
    <property type="entry name" value="Translation factors"/>
    <property type="match status" value="1"/>
</dbReference>
<dbReference type="HAMAP" id="MF_00144">
    <property type="entry name" value="tRNA_thiouridyl_MnmA"/>
    <property type="match status" value="1"/>
</dbReference>
<dbReference type="InterPro" id="IPR004506">
    <property type="entry name" value="MnmA-like"/>
</dbReference>
<dbReference type="InterPro" id="IPR046885">
    <property type="entry name" value="MnmA-like_C"/>
</dbReference>
<dbReference type="InterPro" id="IPR046884">
    <property type="entry name" value="MnmA-like_central"/>
</dbReference>
<dbReference type="InterPro" id="IPR023382">
    <property type="entry name" value="MnmA-like_central_sf"/>
</dbReference>
<dbReference type="InterPro" id="IPR014729">
    <property type="entry name" value="Rossmann-like_a/b/a_fold"/>
</dbReference>
<dbReference type="NCBIfam" id="NF001138">
    <property type="entry name" value="PRK00143.1"/>
    <property type="match status" value="1"/>
</dbReference>
<dbReference type="NCBIfam" id="TIGR00420">
    <property type="entry name" value="trmU"/>
    <property type="match status" value="1"/>
</dbReference>
<dbReference type="PANTHER" id="PTHR11933:SF5">
    <property type="entry name" value="MITOCHONDRIAL TRNA-SPECIFIC 2-THIOURIDYLASE 1"/>
    <property type="match status" value="1"/>
</dbReference>
<dbReference type="PANTHER" id="PTHR11933">
    <property type="entry name" value="TRNA 5-METHYLAMINOMETHYL-2-THIOURIDYLATE -METHYLTRANSFERASE"/>
    <property type="match status" value="1"/>
</dbReference>
<dbReference type="Pfam" id="PF03054">
    <property type="entry name" value="tRNA_Me_trans"/>
    <property type="match status" value="1"/>
</dbReference>
<dbReference type="Pfam" id="PF20258">
    <property type="entry name" value="tRNA_Me_trans_C"/>
    <property type="match status" value="1"/>
</dbReference>
<dbReference type="Pfam" id="PF20259">
    <property type="entry name" value="tRNA_Me_trans_M"/>
    <property type="match status" value="1"/>
</dbReference>
<dbReference type="SUPFAM" id="SSF52402">
    <property type="entry name" value="Adenine nucleotide alpha hydrolases-like"/>
    <property type="match status" value="1"/>
</dbReference>